<keyword id="KW-1015">Disulfide bond</keyword>
<keyword id="KW-0325">Glycoprotein</keyword>
<keyword id="KW-0339">Growth factor</keyword>
<keyword id="KW-0479">Metal-binding</keyword>
<keyword id="KW-0481">Metalloenzyme inhibitor</keyword>
<keyword id="KW-0483">Metalloprotease inhibitor</keyword>
<keyword id="KW-0597">Phosphoprotein</keyword>
<keyword id="KW-0646">Protease inhibitor</keyword>
<keyword id="KW-1185">Reference proteome</keyword>
<keyword id="KW-0964">Secreted</keyword>
<keyword id="KW-0732">Signal</keyword>
<keyword id="KW-0862">Zinc</keyword>
<feature type="signal peptide" evidence="1">
    <location>
        <begin position="1"/>
        <end position="23"/>
    </location>
</feature>
<feature type="chain" id="PRO_0000034324" description="Metalloproteinase inhibitor 1">
    <location>
        <begin position="24"/>
        <end position="207"/>
    </location>
</feature>
<feature type="domain" description="NTR" evidence="5">
    <location>
        <begin position="24"/>
        <end position="147"/>
    </location>
</feature>
<feature type="region of interest" description="Involved in metalloproteinase-binding" evidence="3">
    <location>
        <begin position="24"/>
        <end position="27"/>
    </location>
</feature>
<feature type="region of interest" description="Involved in metalloproteinase-binding" evidence="3">
    <location>
        <begin position="90"/>
        <end position="91"/>
    </location>
</feature>
<feature type="binding site" evidence="3">
    <location>
        <position position="24"/>
    </location>
    <ligand>
        <name>Zn(2+)</name>
        <dbReference type="ChEBI" id="CHEBI:29105"/>
        <note>ligand shared with metalloproteinase partner</note>
    </ligand>
</feature>
<feature type="site" description="Involved in metalloproteinase-binding" evidence="3">
    <location>
        <position position="37"/>
    </location>
</feature>
<feature type="modified residue" description="Phosphoserine" evidence="2">
    <location>
        <position position="178"/>
    </location>
</feature>
<feature type="glycosylation site" description="N-linked (GlcNAc...) asparagine" evidence="4">
    <location>
        <position position="53"/>
    </location>
</feature>
<feature type="glycosylation site" description="N-linked (GlcNAc...) asparagine" evidence="4">
    <location>
        <position position="101"/>
    </location>
</feature>
<feature type="disulfide bond" evidence="5">
    <location>
        <begin position="24"/>
        <end position="93"/>
    </location>
</feature>
<feature type="disulfide bond" evidence="5">
    <location>
        <begin position="26"/>
        <end position="122"/>
    </location>
</feature>
<feature type="disulfide bond" evidence="5">
    <location>
        <begin position="36"/>
        <end position="147"/>
    </location>
</feature>
<feature type="disulfide bond" evidence="5">
    <location>
        <begin position="150"/>
        <end position="197"/>
    </location>
</feature>
<feature type="disulfide bond" evidence="5">
    <location>
        <begin position="155"/>
        <end position="160"/>
    </location>
</feature>
<feature type="disulfide bond" evidence="5">
    <location>
        <begin position="168"/>
        <end position="189"/>
    </location>
</feature>
<comment type="function">
    <text evidence="1">Metalloproteinase inhibitor that functions by forming one to one complexes with target metalloproteinases, such as collagenases, and irreversibly inactivates them by binding to their catalytic zinc cofactor. Acts on MMP1, MMP2, MMP3, MMP7, MMP8, MMP9, MMP10, MMP11, MMP12, MMP13 and MMP16. Does not act on MMP14. Also functions as a growth factor that regulates cell differentiation, migration and cell death and activates cellular signaling cascades via CD63 and ITGB1. Plays a role in integrin signaling (By similarity).</text>
</comment>
<comment type="subunit">
    <text evidence="1">Interacts with MMP1, MMP3, MMP10 and MMP13, but has only very low affinity for MMP14. Interacts with CD63; identified in a complex with CD63 and ITGB1 (By similarity).</text>
</comment>
<comment type="subcellular location">
    <subcellularLocation>
        <location evidence="1">Secreted</location>
    </subcellularLocation>
</comment>
<comment type="PTM">
    <text>The activity of TIMP1 is dependent on the presence of disulfide bonds.</text>
</comment>
<comment type="PTM">
    <text evidence="1">N-glycosylated.</text>
</comment>
<comment type="similarity">
    <text evidence="6">Belongs to the protease inhibitor I35 (TIMP) family.</text>
</comment>
<gene>
    <name type="primary">TIMP1</name>
</gene>
<sequence length="207" mass="23247">MAPFEPLASGILLLLWLIAPSRACTCVLPHPQTAFCNSDLVIRAKFVGTPEVNQTTLYQRYEIKMTKMYKGFQALGDAADIRFVYTPAMESVCGYFHRSHNRSEEFLIAGKLQDGLLHITTCSFVAPWNSLSLAQRRGFTKTYTVGCEECTVFPCLSIPCKLQSGTHCLWTDQLLQGSEKGFQSRHLACLPREPGLCTWQSLRTRMA</sequence>
<evidence type="ECO:0000250" key="1"/>
<evidence type="ECO:0000250" key="2">
    <source>
        <dbReference type="UniProtKB" id="P01033"/>
    </source>
</evidence>
<evidence type="ECO:0000250" key="3">
    <source>
        <dbReference type="UniProtKB" id="P16035"/>
    </source>
</evidence>
<evidence type="ECO:0000255" key="4"/>
<evidence type="ECO:0000255" key="5">
    <source>
        <dbReference type="PROSITE-ProRule" id="PRU00295"/>
    </source>
</evidence>
<evidence type="ECO:0000305" key="6"/>
<protein>
    <recommendedName>
        <fullName>Metalloproteinase inhibitor 1</fullName>
    </recommendedName>
    <alternativeName>
        <fullName>Tissue inhibitor of metalloproteinases 1</fullName>
        <shortName>TIMP-1</shortName>
    </alternativeName>
</protein>
<reference key="1">
    <citation type="submission" date="2001-03" db="EMBL/GenBank/DDBJ databases">
        <title>Cloning and characterization of tissue inhibitor of matrix metalloproteinase-1 (TIMP-1) cDNA from Macaca mulatta.</title>
        <authorList>
            <person name="Ji S."/>
            <person name="Wang Y."/>
            <person name="Li H."/>
            <person name="Ji W."/>
            <person name="Piao Y."/>
        </authorList>
    </citation>
    <scope>NUCLEOTIDE SEQUENCE [MRNA]</scope>
    <source>
        <tissue>Placenta</tissue>
    </source>
</reference>
<organism>
    <name type="scientific">Macaca mulatta</name>
    <name type="common">Rhesus macaque</name>
    <dbReference type="NCBI Taxonomy" id="9544"/>
    <lineage>
        <taxon>Eukaryota</taxon>
        <taxon>Metazoa</taxon>
        <taxon>Chordata</taxon>
        <taxon>Craniata</taxon>
        <taxon>Vertebrata</taxon>
        <taxon>Euteleostomi</taxon>
        <taxon>Mammalia</taxon>
        <taxon>Eutheria</taxon>
        <taxon>Euarchontoglires</taxon>
        <taxon>Primates</taxon>
        <taxon>Haplorrhini</taxon>
        <taxon>Catarrhini</taxon>
        <taxon>Cercopithecidae</taxon>
        <taxon>Cercopithecinae</taxon>
        <taxon>Macaca</taxon>
    </lineage>
</organism>
<dbReference type="EMBL" id="AF366397">
    <property type="protein sequence ID" value="AAK53704.1"/>
    <property type="molecule type" value="mRNA"/>
</dbReference>
<dbReference type="RefSeq" id="NP_001028111.1">
    <property type="nucleotide sequence ID" value="NM_001032939.1"/>
</dbReference>
<dbReference type="BMRB" id="Q95KL9"/>
<dbReference type="SMR" id="Q95KL9"/>
<dbReference type="FunCoup" id="Q95KL9">
    <property type="interactions" value="280"/>
</dbReference>
<dbReference type="STRING" id="9544.ENSMMUP00000041096"/>
<dbReference type="GlyCosmos" id="Q95KL9">
    <property type="glycosylation" value="2 sites, No reported glycans"/>
</dbReference>
<dbReference type="PaxDb" id="9544-ENSMMUP00000014993"/>
<dbReference type="Ensembl" id="ENSMMUT00000048056.3">
    <property type="protein sequence ID" value="ENSMMUP00000041096.2"/>
    <property type="gene ID" value="ENSMMUG00000011426.4"/>
</dbReference>
<dbReference type="GeneID" id="574348"/>
<dbReference type="KEGG" id="mcc:574348"/>
<dbReference type="CTD" id="7076"/>
<dbReference type="VEuPathDB" id="HostDB:ENSMMUG00000011426"/>
<dbReference type="VGNC" id="VGNC:78357">
    <property type="gene designation" value="TIMP1"/>
</dbReference>
<dbReference type="eggNOG" id="KOG4745">
    <property type="taxonomic scope" value="Eukaryota"/>
</dbReference>
<dbReference type="GeneTree" id="ENSGT00940000161081"/>
<dbReference type="HOGENOM" id="CLU_084029_0_0_1"/>
<dbReference type="InParanoid" id="Q95KL9"/>
<dbReference type="OMA" id="LWTDQFL"/>
<dbReference type="OrthoDB" id="6041373at2759"/>
<dbReference type="TreeFam" id="TF317409"/>
<dbReference type="Proteomes" id="UP000006718">
    <property type="component" value="Chromosome X"/>
</dbReference>
<dbReference type="Bgee" id="ENSMMUG00000011426">
    <property type="expression patterns" value="Expressed in fibroblast and 21 other cell types or tissues"/>
</dbReference>
<dbReference type="ExpressionAtlas" id="Q95KL9">
    <property type="expression patterns" value="baseline"/>
</dbReference>
<dbReference type="GO" id="GO:0005604">
    <property type="term" value="C:basement membrane"/>
    <property type="evidence" value="ECO:0007669"/>
    <property type="project" value="Ensembl"/>
</dbReference>
<dbReference type="GO" id="GO:0031012">
    <property type="term" value="C:extracellular matrix"/>
    <property type="evidence" value="ECO:0000318"/>
    <property type="project" value="GO_Central"/>
</dbReference>
<dbReference type="GO" id="GO:0005615">
    <property type="term" value="C:extracellular space"/>
    <property type="evidence" value="ECO:0000250"/>
    <property type="project" value="UniProtKB"/>
</dbReference>
<dbReference type="GO" id="GO:0005125">
    <property type="term" value="F:cytokine activity"/>
    <property type="evidence" value="ECO:0000250"/>
    <property type="project" value="UniProtKB"/>
</dbReference>
<dbReference type="GO" id="GO:0008083">
    <property type="term" value="F:growth factor activity"/>
    <property type="evidence" value="ECO:0007669"/>
    <property type="project" value="UniProtKB-KW"/>
</dbReference>
<dbReference type="GO" id="GO:0008191">
    <property type="term" value="F:metalloendopeptidase inhibitor activity"/>
    <property type="evidence" value="ECO:0000250"/>
    <property type="project" value="UniProtKB"/>
</dbReference>
<dbReference type="GO" id="GO:0008270">
    <property type="term" value="F:zinc ion binding"/>
    <property type="evidence" value="ECO:0007669"/>
    <property type="project" value="Ensembl"/>
</dbReference>
<dbReference type="GO" id="GO:0071492">
    <property type="term" value="P:cellular response to UV-A"/>
    <property type="evidence" value="ECO:0000250"/>
    <property type="project" value="UniProtKB"/>
</dbReference>
<dbReference type="GO" id="GO:0002248">
    <property type="term" value="P:connective tissue replacement involved in inflammatory response wound healing"/>
    <property type="evidence" value="ECO:0007669"/>
    <property type="project" value="Ensembl"/>
</dbReference>
<dbReference type="GO" id="GO:0043086">
    <property type="term" value="P:negative regulation of catalytic activity"/>
    <property type="evidence" value="ECO:0000250"/>
    <property type="project" value="UniProtKB"/>
</dbReference>
<dbReference type="GO" id="GO:0010951">
    <property type="term" value="P:negative regulation of endopeptidase activity"/>
    <property type="evidence" value="ECO:0000250"/>
    <property type="project" value="UniProtKB"/>
</dbReference>
<dbReference type="GO" id="GO:0051045">
    <property type="term" value="P:negative regulation of membrane protein ectodomain proteolysis"/>
    <property type="evidence" value="ECO:0000318"/>
    <property type="project" value="GO_Central"/>
</dbReference>
<dbReference type="GO" id="GO:1901164">
    <property type="term" value="P:negative regulation of trophoblast cell migration"/>
    <property type="evidence" value="ECO:0007669"/>
    <property type="project" value="Ensembl"/>
</dbReference>
<dbReference type="GO" id="GO:0008284">
    <property type="term" value="P:positive regulation of cell population proliferation"/>
    <property type="evidence" value="ECO:0000250"/>
    <property type="project" value="UniProtKB"/>
</dbReference>
<dbReference type="GO" id="GO:2001044">
    <property type="term" value="P:regulation of integrin-mediated signaling pathway"/>
    <property type="evidence" value="ECO:0000250"/>
    <property type="project" value="UniProtKB"/>
</dbReference>
<dbReference type="GO" id="GO:0034097">
    <property type="term" value="P:response to cytokine"/>
    <property type="evidence" value="ECO:0000318"/>
    <property type="project" value="GO_Central"/>
</dbReference>
<dbReference type="GO" id="GO:0009725">
    <property type="term" value="P:response to hormone"/>
    <property type="evidence" value="ECO:0000318"/>
    <property type="project" value="GO_Central"/>
</dbReference>
<dbReference type="CDD" id="cd03585">
    <property type="entry name" value="NTR_TIMP"/>
    <property type="match status" value="1"/>
</dbReference>
<dbReference type="FunFam" id="2.40.50.120:FF:000016">
    <property type="entry name" value="Metalloproteinase inhibitor 1"/>
    <property type="match status" value="1"/>
</dbReference>
<dbReference type="FunFam" id="3.90.370.10:FF:000001">
    <property type="entry name" value="Metalloproteinase inhibitor 3"/>
    <property type="match status" value="1"/>
</dbReference>
<dbReference type="Gene3D" id="2.40.50.120">
    <property type="match status" value="1"/>
</dbReference>
<dbReference type="Gene3D" id="3.90.370.10">
    <property type="entry name" value="Tissue inhibitor of metalloproteinase-1. Chain B, domain 1"/>
    <property type="match status" value="1"/>
</dbReference>
<dbReference type="InterPro" id="IPR001134">
    <property type="entry name" value="Netrin_domain"/>
</dbReference>
<dbReference type="InterPro" id="IPR001820">
    <property type="entry name" value="TIMP"/>
</dbReference>
<dbReference type="InterPro" id="IPR008993">
    <property type="entry name" value="TIMP-like_OB-fold"/>
</dbReference>
<dbReference type="InterPro" id="IPR027465">
    <property type="entry name" value="TIMP_C"/>
</dbReference>
<dbReference type="PANTHER" id="PTHR11844">
    <property type="entry name" value="METALLOPROTEASE INHIBITOR"/>
    <property type="match status" value="1"/>
</dbReference>
<dbReference type="PANTHER" id="PTHR11844:SF20">
    <property type="entry name" value="METALLOPROTEINASE INHIBITOR 1"/>
    <property type="match status" value="1"/>
</dbReference>
<dbReference type="Pfam" id="PF00965">
    <property type="entry name" value="TIMP"/>
    <property type="match status" value="1"/>
</dbReference>
<dbReference type="SMART" id="SM00206">
    <property type="entry name" value="NTR"/>
    <property type="match status" value="1"/>
</dbReference>
<dbReference type="SUPFAM" id="SSF50242">
    <property type="entry name" value="TIMP-like"/>
    <property type="match status" value="1"/>
</dbReference>
<dbReference type="PROSITE" id="PS50189">
    <property type="entry name" value="NTR"/>
    <property type="match status" value="1"/>
</dbReference>
<name>TIMP1_MACMU</name>
<proteinExistence type="evidence at transcript level"/>
<accession>Q95KL9</accession>